<reference key="1">
    <citation type="submission" date="2005-09" db="EMBL/GenBank/DDBJ databases">
        <title>Annotation of the Aspergillus terreus NIH2624 genome.</title>
        <authorList>
            <person name="Birren B.W."/>
            <person name="Lander E.S."/>
            <person name="Galagan J.E."/>
            <person name="Nusbaum C."/>
            <person name="Devon K."/>
            <person name="Henn M."/>
            <person name="Ma L.-J."/>
            <person name="Jaffe D.B."/>
            <person name="Butler J."/>
            <person name="Alvarez P."/>
            <person name="Gnerre S."/>
            <person name="Grabherr M."/>
            <person name="Kleber M."/>
            <person name="Mauceli E.W."/>
            <person name="Brockman W."/>
            <person name="Rounsley S."/>
            <person name="Young S.K."/>
            <person name="LaButti K."/>
            <person name="Pushparaj V."/>
            <person name="DeCaprio D."/>
            <person name="Crawford M."/>
            <person name="Koehrsen M."/>
            <person name="Engels R."/>
            <person name="Montgomery P."/>
            <person name="Pearson M."/>
            <person name="Howarth C."/>
            <person name="Larson L."/>
            <person name="Luoma S."/>
            <person name="White J."/>
            <person name="Alvarado L."/>
            <person name="Kodira C.D."/>
            <person name="Zeng Q."/>
            <person name="Oleary S."/>
            <person name="Yandava C."/>
            <person name="Denning D.W."/>
            <person name="Nierman W.C."/>
            <person name="Milne T."/>
            <person name="Madden K."/>
        </authorList>
    </citation>
    <scope>NUCLEOTIDE SEQUENCE [LARGE SCALE GENOMIC DNA]</scope>
    <source>
        <strain>NIH 2624 / FGSC A1156</strain>
    </source>
</reference>
<name>3HAO_ASPTN</name>
<protein>
    <recommendedName>
        <fullName evidence="1">3-hydroxyanthranilate 3,4-dioxygenase</fullName>
        <ecNumber evidence="1">1.13.11.6</ecNumber>
    </recommendedName>
    <alternativeName>
        <fullName evidence="1">3-hydroxyanthranilate oxygenase</fullName>
        <shortName evidence="1">3-HAO</shortName>
    </alternativeName>
    <alternativeName>
        <fullName evidence="1">3-hydroxyanthranilic acid dioxygenase</fullName>
        <shortName evidence="1">HAD</shortName>
    </alternativeName>
    <alternativeName>
        <fullName evidence="1">Biosynthesis of nicotinic acid protein 1</fullName>
    </alternativeName>
</protein>
<accession>Q0D1U6</accession>
<gene>
    <name type="primary">bna1</name>
    <name type="ORF">ATEG_00088</name>
</gene>
<dbReference type="EC" id="1.13.11.6" evidence="1"/>
<dbReference type="EMBL" id="CH476594">
    <property type="protein sequence ID" value="EAU38734.1"/>
    <property type="status" value="ALT_SEQ"/>
    <property type="molecule type" value="Genomic_DNA"/>
</dbReference>
<dbReference type="RefSeq" id="XP_001210174.1">
    <property type="nucleotide sequence ID" value="XM_001210174.1"/>
</dbReference>
<dbReference type="SMR" id="Q0D1U6"/>
<dbReference type="STRING" id="341663.Q0D1U6"/>
<dbReference type="GeneID" id="4354845"/>
<dbReference type="eggNOG" id="KOG3995">
    <property type="taxonomic scope" value="Eukaryota"/>
</dbReference>
<dbReference type="OrthoDB" id="204928at2759"/>
<dbReference type="UniPathway" id="UPA00253">
    <property type="reaction ID" value="UER00330"/>
</dbReference>
<dbReference type="Proteomes" id="UP000007963">
    <property type="component" value="Unassembled WGS sequence"/>
</dbReference>
<dbReference type="GO" id="GO:0005737">
    <property type="term" value="C:cytoplasm"/>
    <property type="evidence" value="ECO:0007669"/>
    <property type="project" value="UniProtKB-SubCell"/>
</dbReference>
<dbReference type="GO" id="GO:0000334">
    <property type="term" value="F:3-hydroxyanthranilate 3,4-dioxygenase activity"/>
    <property type="evidence" value="ECO:0007669"/>
    <property type="project" value="UniProtKB-UniRule"/>
</dbReference>
<dbReference type="GO" id="GO:0008198">
    <property type="term" value="F:ferrous iron binding"/>
    <property type="evidence" value="ECO:0007669"/>
    <property type="project" value="UniProtKB-UniRule"/>
</dbReference>
<dbReference type="GO" id="GO:0034354">
    <property type="term" value="P:'de novo' NAD biosynthetic process from L-tryptophan"/>
    <property type="evidence" value="ECO:0007669"/>
    <property type="project" value="UniProtKB-UniRule"/>
</dbReference>
<dbReference type="GO" id="GO:0043420">
    <property type="term" value="P:anthranilate metabolic process"/>
    <property type="evidence" value="ECO:0007669"/>
    <property type="project" value="UniProtKB-UniRule"/>
</dbReference>
<dbReference type="GO" id="GO:0006569">
    <property type="term" value="P:L-tryptophan catabolic process"/>
    <property type="evidence" value="ECO:0007669"/>
    <property type="project" value="UniProtKB-UniRule"/>
</dbReference>
<dbReference type="GO" id="GO:0019805">
    <property type="term" value="P:quinolinate biosynthetic process"/>
    <property type="evidence" value="ECO:0007669"/>
    <property type="project" value="UniProtKB-UniRule"/>
</dbReference>
<dbReference type="CDD" id="cd06123">
    <property type="entry name" value="cupin_HAO"/>
    <property type="match status" value="1"/>
</dbReference>
<dbReference type="FunFam" id="2.60.120.10:FF:000093">
    <property type="entry name" value="3-hydroxyanthranilate 3,4-dioxygenase"/>
    <property type="match status" value="1"/>
</dbReference>
<dbReference type="Gene3D" id="2.60.120.10">
    <property type="entry name" value="Jelly Rolls"/>
    <property type="match status" value="1"/>
</dbReference>
<dbReference type="HAMAP" id="MF_00825">
    <property type="entry name" value="3_HAO"/>
    <property type="match status" value="1"/>
</dbReference>
<dbReference type="InterPro" id="IPR010329">
    <property type="entry name" value="3hydroanth_dOase"/>
</dbReference>
<dbReference type="InterPro" id="IPR014710">
    <property type="entry name" value="RmlC-like_jellyroll"/>
</dbReference>
<dbReference type="InterPro" id="IPR011051">
    <property type="entry name" value="RmlC_Cupin_sf"/>
</dbReference>
<dbReference type="NCBIfam" id="TIGR03037">
    <property type="entry name" value="anthran_nbaC"/>
    <property type="match status" value="1"/>
</dbReference>
<dbReference type="PANTHER" id="PTHR15497">
    <property type="entry name" value="3-HYDROXYANTHRANILATE 3,4-DIOXYGENASE"/>
    <property type="match status" value="1"/>
</dbReference>
<dbReference type="PANTHER" id="PTHR15497:SF1">
    <property type="entry name" value="3-HYDROXYANTHRANILATE 3,4-DIOXYGENASE"/>
    <property type="match status" value="1"/>
</dbReference>
<dbReference type="Pfam" id="PF06052">
    <property type="entry name" value="3-HAO"/>
    <property type="match status" value="1"/>
</dbReference>
<dbReference type="SUPFAM" id="SSF51182">
    <property type="entry name" value="RmlC-like cupins"/>
    <property type="match status" value="1"/>
</dbReference>
<organism>
    <name type="scientific">Aspergillus terreus (strain NIH 2624 / FGSC A1156)</name>
    <dbReference type="NCBI Taxonomy" id="341663"/>
    <lineage>
        <taxon>Eukaryota</taxon>
        <taxon>Fungi</taxon>
        <taxon>Dikarya</taxon>
        <taxon>Ascomycota</taxon>
        <taxon>Pezizomycotina</taxon>
        <taxon>Eurotiomycetes</taxon>
        <taxon>Eurotiomycetidae</taxon>
        <taxon>Eurotiales</taxon>
        <taxon>Aspergillaceae</taxon>
        <taxon>Aspergillus</taxon>
        <taxon>Aspergillus subgen. Circumdati</taxon>
    </lineage>
</organism>
<comment type="function">
    <text evidence="1">Catalyzes the oxidative ring opening of 3-hydroxyanthranilate to 2-amino-3-carboxymuconate semialdehyde, which spontaneously cyclizes to quinolinate.</text>
</comment>
<comment type="catalytic activity">
    <reaction evidence="1">
        <text>3-hydroxyanthranilate + O2 = (2Z,4Z)-2-amino-3-carboxymuconate 6-semialdehyde</text>
        <dbReference type="Rhea" id="RHEA:17953"/>
        <dbReference type="ChEBI" id="CHEBI:15379"/>
        <dbReference type="ChEBI" id="CHEBI:36559"/>
        <dbReference type="ChEBI" id="CHEBI:77612"/>
        <dbReference type="EC" id="1.13.11.6"/>
    </reaction>
</comment>
<comment type="cofactor">
    <cofactor evidence="1">
        <name>Fe(2+)</name>
        <dbReference type="ChEBI" id="CHEBI:29033"/>
    </cofactor>
</comment>
<comment type="pathway">
    <text evidence="1">Cofactor biosynthesis; NAD(+) biosynthesis; quinolinate from L-kynurenine: step 3/3.</text>
</comment>
<comment type="subcellular location">
    <subcellularLocation>
        <location evidence="1">Cytoplasm</location>
    </subcellularLocation>
</comment>
<comment type="similarity">
    <text evidence="1">Belongs to the 3-HAO family.</text>
</comment>
<comment type="sequence caution" evidence="2">
    <conflict type="erroneous gene model prediction">
        <sequence resource="EMBL-CDS" id="EAU38734"/>
    </conflict>
</comment>
<sequence length="195" mass="21701">MLPPALNIPKWLEANSHLLQPPVNNYCVYHPSSPATSGYTVMIVGGPNARTDYHINSTPEFFYQYRGSMLLRTVDRSVSPPAFQDIPIHEGSLFLLPANTPHCPVRFADTVGVVMEVPRAPDATDTMLWFCPNSACKQVVWEKRFVCTDLGTQVKEVVEEFSADLAKRTCAACGTVAESRYKEGELTQPPRFPPE</sequence>
<keyword id="KW-0963">Cytoplasm</keyword>
<keyword id="KW-0223">Dioxygenase</keyword>
<keyword id="KW-0408">Iron</keyword>
<keyword id="KW-0479">Metal-binding</keyword>
<keyword id="KW-0560">Oxidoreductase</keyword>
<keyword id="KW-0662">Pyridine nucleotide biosynthesis</keyword>
<keyword id="KW-1185">Reference proteome</keyword>
<proteinExistence type="inferred from homology"/>
<evidence type="ECO:0000255" key="1">
    <source>
        <dbReference type="HAMAP-Rule" id="MF_03019"/>
    </source>
</evidence>
<evidence type="ECO:0000305" key="2"/>
<feature type="chain" id="PRO_0000361983" description="3-hydroxyanthranilate 3,4-dioxygenase">
    <location>
        <begin position="1"/>
        <end position="195"/>
    </location>
</feature>
<feature type="binding site" evidence="1">
    <location>
        <position position="50"/>
    </location>
    <ligand>
        <name>O2</name>
        <dbReference type="ChEBI" id="CHEBI:15379"/>
    </ligand>
</feature>
<feature type="binding site" evidence="1">
    <location>
        <position position="54"/>
    </location>
    <ligand>
        <name>Fe cation</name>
        <dbReference type="ChEBI" id="CHEBI:24875"/>
        <note>catalytic</note>
    </ligand>
</feature>
<feature type="binding site" evidence="1">
    <location>
        <position position="60"/>
    </location>
    <ligand>
        <name>Fe cation</name>
        <dbReference type="ChEBI" id="CHEBI:24875"/>
        <note>catalytic</note>
    </ligand>
</feature>
<feature type="binding site" evidence="1">
    <location>
        <position position="60"/>
    </location>
    <ligand>
        <name>substrate</name>
    </ligand>
</feature>
<feature type="binding site" evidence="1">
    <location>
        <position position="102"/>
    </location>
    <ligand>
        <name>Fe cation</name>
        <dbReference type="ChEBI" id="CHEBI:24875"/>
        <note>catalytic</note>
    </ligand>
</feature>
<feature type="binding site" evidence="1">
    <location>
        <position position="106"/>
    </location>
    <ligand>
        <name>substrate</name>
    </ligand>
</feature>
<feature type="binding site" evidence="1">
    <location>
        <position position="116"/>
    </location>
    <ligand>
        <name>substrate</name>
    </ligand>
</feature>
<feature type="binding site" evidence="1">
    <location>
        <position position="131"/>
    </location>
    <ligand>
        <name>a divalent metal cation</name>
        <dbReference type="ChEBI" id="CHEBI:60240"/>
    </ligand>
</feature>
<feature type="binding site" evidence="1">
    <location>
        <position position="136"/>
    </location>
    <ligand>
        <name>a divalent metal cation</name>
        <dbReference type="ChEBI" id="CHEBI:60240"/>
    </ligand>
</feature>
<feature type="binding site" evidence="1">
    <location>
        <position position="170"/>
    </location>
    <ligand>
        <name>a divalent metal cation</name>
        <dbReference type="ChEBI" id="CHEBI:60240"/>
    </ligand>
</feature>
<feature type="binding site" evidence="1">
    <location>
        <position position="173"/>
    </location>
    <ligand>
        <name>a divalent metal cation</name>
        <dbReference type="ChEBI" id="CHEBI:60240"/>
    </ligand>
</feature>